<sequence>MPSANASRKGQEKPREIVDAAEDYAKERYGVSSMIQSQEKPDRVLVRVKDLTVQKADEVVWVRARVHTSRAKGKQCFLVLRQQQFNVQALVAVGDHASKQMVKFAANINKESIIDVEGIVRKVNQKIGSCTQQDVELHVQKIYVISLAEPRLPLQLDDAIRPEVEGEEDGRATVNQDTRLDNRIIDLRTSTSQAIFHLQSGICHLFRETLINKGFVEIQTPKIISAASEGGANVFTVSYFKSNAYLAQSPQLYKQMCICADFEKVFCIGPVFRAEDSNTHRHLTEFVGLDIEMAFNYHYHEVVEEIADTLVQIFKGLQERFQTEIQTVNKQFPCEPFKFLEPTLRLEYCEALAMLREAGVEMDDEEDLSTPNEKLLGRLVKEKYDTDFYVLDKYPLAVRPFYTMPDPRNPKQSNSYDMFMRGEEILSGAQRIHDPQLLTERALHHGIDLEKIKAYIDSFRFGAPPHAGGGIGLERVTMLFLGLHNVRQTSMFPRDPKRLTP</sequence>
<feature type="chain" id="PRO_0000111012" description="Aspartate--tRNA ligase, cytoplasmic">
    <location>
        <begin position="1"/>
        <end position="501"/>
    </location>
</feature>
<feature type="region of interest" description="Aspartate" evidence="1">
    <location>
        <begin position="251"/>
        <end position="254"/>
    </location>
</feature>
<feature type="binding site" evidence="1">
    <location>
        <position position="229"/>
    </location>
    <ligand>
        <name>L-aspartate</name>
        <dbReference type="ChEBI" id="CHEBI:29991"/>
    </ligand>
</feature>
<feature type="binding site" evidence="1">
    <location>
        <begin position="273"/>
        <end position="275"/>
    </location>
    <ligand>
        <name>ATP</name>
        <dbReference type="ChEBI" id="CHEBI:30616"/>
    </ligand>
</feature>
<feature type="binding site" evidence="1">
    <location>
        <position position="273"/>
    </location>
    <ligand>
        <name>L-aspartate</name>
        <dbReference type="ChEBI" id="CHEBI:29991"/>
    </ligand>
</feature>
<feature type="binding site" evidence="1">
    <location>
        <begin position="281"/>
        <end position="283"/>
    </location>
    <ligand>
        <name>ATP</name>
        <dbReference type="ChEBI" id="CHEBI:30616"/>
    </ligand>
</feature>
<feature type="binding site" evidence="1">
    <location>
        <position position="424"/>
    </location>
    <ligand>
        <name>ATP</name>
        <dbReference type="ChEBI" id="CHEBI:30616"/>
    </ligand>
</feature>
<feature type="binding site" evidence="1">
    <location>
        <position position="427"/>
    </location>
    <ligand>
        <name>L-aspartate</name>
        <dbReference type="ChEBI" id="CHEBI:29991"/>
    </ligand>
</feature>
<feature type="binding site" evidence="1">
    <location>
        <position position="431"/>
    </location>
    <ligand>
        <name>L-aspartate</name>
        <dbReference type="ChEBI" id="CHEBI:29991"/>
    </ligand>
</feature>
<feature type="binding site" evidence="1">
    <location>
        <begin position="472"/>
        <end position="475"/>
    </location>
    <ligand>
        <name>ATP</name>
        <dbReference type="ChEBI" id="CHEBI:30616"/>
    </ligand>
</feature>
<feature type="modified residue" description="Phosphothreonine" evidence="2">
    <location>
        <position position="52"/>
    </location>
</feature>
<feature type="modified residue" description="N6-acetyllysine" evidence="2">
    <location>
        <position position="74"/>
    </location>
</feature>
<feature type="modified residue" description="Phosphoserine" evidence="2">
    <location>
        <position position="249"/>
    </location>
</feature>
<feature type="modified residue" description="N6-acetyllysine" evidence="2">
    <location>
        <position position="374"/>
    </location>
</feature>
<evidence type="ECO:0000250" key="1"/>
<evidence type="ECO:0000250" key="2">
    <source>
        <dbReference type="UniProtKB" id="P14868"/>
    </source>
</evidence>
<evidence type="ECO:0000269" key="3">
    <source>
    </source>
</evidence>
<evidence type="ECO:0000305" key="4"/>
<proteinExistence type="evidence at protein level"/>
<keyword id="KW-0007">Acetylation</keyword>
<keyword id="KW-0030">Aminoacyl-tRNA synthetase</keyword>
<keyword id="KW-0067">ATP-binding</keyword>
<keyword id="KW-0963">Cytoplasm</keyword>
<keyword id="KW-0436">Ligase</keyword>
<keyword id="KW-0547">Nucleotide-binding</keyword>
<keyword id="KW-0597">Phosphoprotein</keyword>
<keyword id="KW-0648">Protein biosynthesis</keyword>
<keyword id="KW-1185">Reference proteome</keyword>
<protein>
    <recommendedName>
        <fullName>Aspartate--tRNA ligase, cytoplasmic</fullName>
        <ecNumber evidence="3">6.1.1.12</ecNumber>
    </recommendedName>
    <alternativeName>
        <fullName>Aspartyl-tRNA synthetase</fullName>
        <shortName>AspRS</shortName>
    </alternativeName>
</protein>
<comment type="function">
    <text evidence="3">Catalyzes the specific attachment of an amino acid to its cognate tRNA in a 2 step reaction: the amino acid (AA) is first activated by ATP to form AA-AMP and then transferred to the acceptor end of the tRNA.</text>
</comment>
<comment type="catalytic activity">
    <reaction evidence="3">
        <text>tRNA(Asp) + L-aspartate + ATP = L-aspartyl-tRNA(Asp) + AMP + diphosphate</text>
        <dbReference type="Rhea" id="RHEA:19649"/>
        <dbReference type="Rhea" id="RHEA-COMP:9660"/>
        <dbReference type="Rhea" id="RHEA-COMP:9678"/>
        <dbReference type="ChEBI" id="CHEBI:29991"/>
        <dbReference type="ChEBI" id="CHEBI:30616"/>
        <dbReference type="ChEBI" id="CHEBI:33019"/>
        <dbReference type="ChEBI" id="CHEBI:78442"/>
        <dbReference type="ChEBI" id="CHEBI:78516"/>
        <dbReference type="ChEBI" id="CHEBI:456215"/>
        <dbReference type="EC" id="6.1.1.12"/>
    </reaction>
</comment>
<comment type="subunit">
    <text evidence="2 3">Homodimer (PubMed:2642907). Part of a multisubunit complex that groups tRNA ligases for Arg (RARS1), Asp (DARS1), Gln (QARS1), Ile (IARS1), Leu (LARS1), Lys (KARS1), Met (MARS1) the bifunctional ligase for Glu and Pro (EPRS1) and the auxiliary subunits AIMP1/p43, AIMP2/p38 and EEF1E1/p18 (By similarity).</text>
</comment>
<comment type="subcellular location">
    <subcellularLocation>
        <location>Cytoplasm</location>
    </subcellularLocation>
</comment>
<comment type="similarity">
    <text evidence="4">Belongs to the class-II aminoacyl-tRNA synthetase family. Type 2 subfamily.</text>
</comment>
<organism>
    <name type="scientific">Rattus norvegicus</name>
    <name type="common">Rat</name>
    <dbReference type="NCBI Taxonomy" id="10116"/>
    <lineage>
        <taxon>Eukaryota</taxon>
        <taxon>Metazoa</taxon>
        <taxon>Chordata</taxon>
        <taxon>Craniata</taxon>
        <taxon>Vertebrata</taxon>
        <taxon>Euteleostomi</taxon>
        <taxon>Mammalia</taxon>
        <taxon>Eutheria</taxon>
        <taxon>Euarchontoglires</taxon>
        <taxon>Glires</taxon>
        <taxon>Rodentia</taxon>
        <taxon>Myomorpha</taxon>
        <taxon>Muroidea</taxon>
        <taxon>Muridae</taxon>
        <taxon>Murinae</taxon>
        <taxon>Rattus</taxon>
    </lineage>
</organism>
<name>SYDC_RAT</name>
<dbReference type="EC" id="6.1.1.12" evidence="3"/>
<dbReference type="EMBL" id="J04487">
    <property type="protein sequence ID" value="AAA40789.1"/>
    <property type="molecule type" value="mRNA"/>
</dbReference>
<dbReference type="EMBL" id="U30812">
    <property type="protein sequence ID" value="AAC52981.1"/>
    <property type="molecule type" value="Genomic_DNA"/>
</dbReference>
<dbReference type="EMBL" id="U30485">
    <property type="protein sequence ID" value="AAC52981.1"/>
    <property type="status" value="JOINED"/>
    <property type="molecule type" value="Genomic_DNA"/>
</dbReference>
<dbReference type="EMBL" id="U30800">
    <property type="protein sequence ID" value="AAC52981.1"/>
    <property type="status" value="JOINED"/>
    <property type="molecule type" value="Genomic_DNA"/>
</dbReference>
<dbReference type="EMBL" id="U30801">
    <property type="protein sequence ID" value="AAC52981.1"/>
    <property type="status" value="JOINED"/>
    <property type="molecule type" value="Genomic_DNA"/>
</dbReference>
<dbReference type="EMBL" id="U30802">
    <property type="protein sequence ID" value="AAC52981.1"/>
    <property type="status" value="JOINED"/>
    <property type="molecule type" value="Genomic_DNA"/>
</dbReference>
<dbReference type="EMBL" id="U30803">
    <property type="protein sequence ID" value="AAC52981.1"/>
    <property type="status" value="JOINED"/>
    <property type="molecule type" value="Genomic_DNA"/>
</dbReference>
<dbReference type="EMBL" id="U30804">
    <property type="protein sequence ID" value="AAC52981.1"/>
    <property type="status" value="JOINED"/>
    <property type="molecule type" value="Genomic_DNA"/>
</dbReference>
<dbReference type="EMBL" id="U30805">
    <property type="protein sequence ID" value="AAC52981.1"/>
    <property type="status" value="JOINED"/>
    <property type="molecule type" value="Genomic_DNA"/>
</dbReference>
<dbReference type="EMBL" id="U30806">
    <property type="protein sequence ID" value="AAC52981.1"/>
    <property type="status" value="JOINED"/>
    <property type="molecule type" value="Genomic_DNA"/>
</dbReference>
<dbReference type="EMBL" id="U30807">
    <property type="protein sequence ID" value="AAC52981.1"/>
    <property type="status" value="JOINED"/>
    <property type="molecule type" value="Genomic_DNA"/>
</dbReference>
<dbReference type="EMBL" id="U30808">
    <property type="protein sequence ID" value="AAC52981.1"/>
    <property type="status" value="JOINED"/>
    <property type="molecule type" value="Genomic_DNA"/>
</dbReference>
<dbReference type="EMBL" id="U30809">
    <property type="protein sequence ID" value="AAC52981.1"/>
    <property type="status" value="JOINED"/>
    <property type="molecule type" value="Genomic_DNA"/>
</dbReference>
<dbReference type="EMBL" id="U30810">
    <property type="protein sequence ID" value="AAC52981.1"/>
    <property type="status" value="JOINED"/>
    <property type="molecule type" value="Genomic_DNA"/>
</dbReference>
<dbReference type="EMBL" id="U30811">
    <property type="protein sequence ID" value="AAC52981.1"/>
    <property type="status" value="JOINED"/>
    <property type="molecule type" value="Genomic_DNA"/>
</dbReference>
<dbReference type="EMBL" id="BC072534">
    <property type="protein sequence ID" value="AAH72534.1"/>
    <property type="molecule type" value="mRNA"/>
</dbReference>
<dbReference type="PIR" id="A32197">
    <property type="entry name" value="SYRTDT"/>
</dbReference>
<dbReference type="RefSeq" id="NP_446251.1">
    <property type="nucleotide sequence ID" value="NM_053799.3"/>
</dbReference>
<dbReference type="SMR" id="P15178"/>
<dbReference type="BioGRID" id="250460">
    <property type="interactions" value="6"/>
</dbReference>
<dbReference type="FunCoup" id="P15178">
    <property type="interactions" value="2964"/>
</dbReference>
<dbReference type="IntAct" id="P15178">
    <property type="interactions" value="4"/>
</dbReference>
<dbReference type="MINT" id="P15178"/>
<dbReference type="STRING" id="10116.ENSRNOP00000005127"/>
<dbReference type="iPTMnet" id="P15178"/>
<dbReference type="PhosphoSitePlus" id="P15178"/>
<dbReference type="jPOST" id="P15178"/>
<dbReference type="PaxDb" id="10116-ENSRNOP00000005127"/>
<dbReference type="Ensembl" id="ENSRNOT00000005127.7">
    <property type="protein sequence ID" value="ENSRNOP00000005127.3"/>
    <property type="gene ID" value="ENSRNOG00000003743.8"/>
</dbReference>
<dbReference type="GeneID" id="116483"/>
<dbReference type="KEGG" id="rno:116483"/>
<dbReference type="UCSC" id="RGD:621167">
    <property type="organism name" value="rat"/>
</dbReference>
<dbReference type="AGR" id="RGD:621167"/>
<dbReference type="CTD" id="1615"/>
<dbReference type="RGD" id="621167">
    <property type="gene designation" value="Dars1"/>
</dbReference>
<dbReference type="eggNOG" id="KOG0556">
    <property type="taxonomic scope" value="Eukaryota"/>
</dbReference>
<dbReference type="GeneTree" id="ENSGT01030000234618"/>
<dbReference type="HOGENOM" id="CLU_004553_2_1_1"/>
<dbReference type="InParanoid" id="P15178"/>
<dbReference type="OMA" id="WVHEIRD"/>
<dbReference type="OrthoDB" id="372395at2759"/>
<dbReference type="PhylomeDB" id="P15178"/>
<dbReference type="TreeFam" id="TF105676"/>
<dbReference type="Reactome" id="R-RNO-9856649">
    <property type="pathway name" value="Transcriptional and post-translational regulation of MITF-M expression and activity"/>
</dbReference>
<dbReference type="PRO" id="PR:P15178"/>
<dbReference type="Proteomes" id="UP000002494">
    <property type="component" value="Chromosome 13"/>
</dbReference>
<dbReference type="Bgee" id="ENSRNOG00000003743">
    <property type="expression patterns" value="Expressed in quadriceps femoris and 20 other cell types or tissues"/>
</dbReference>
<dbReference type="ExpressionAtlas" id="P15178">
    <property type="expression patterns" value="baseline and differential"/>
</dbReference>
<dbReference type="GO" id="GO:0017101">
    <property type="term" value="C:aminoacyl-tRNA synthetase multienzyme complex"/>
    <property type="evidence" value="ECO:0000250"/>
    <property type="project" value="UniProtKB"/>
</dbReference>
<dbReference type="GO" id="GO:0005737">
    <property type="term" value="C:cytoplasm"/>
    <property type="evidence" value="ECO:0000266"/>
    <property type="project" value="RGD"/>
</dbReference>
<dbReference type="GO" id="GO:0005829">
    <property type="term" value="C:cytosol"/>
    <property type="evidence" value="ECO:0000266"/>
    <property type="project" value="RGD"/>
</dbReference>
<dbReference type="GO" id="GO:0045202">
    <property type="term" value="C:synapse"/>
    <property type="evidence" value="ECO:0000266"/>
    <property type="project" value="RGD"/>
</dbReference>
<dbReference type="GO" id="GO:0004815">
    <property type="term" value="F:aspartate-tRNA ligase activity"/>
    <property type="evidence" value="ECO:0000318"/>
    <property type="project" value="GO_Central"/>
</dbReference>
<dbReference type="GO" id="GO:0005524">
    <property type="term" value="F:ATP binding"/>
    <property type="evidence" value="ECO:0007669"/>
    <property type="project" value="UniProtKB-KW"/>
</dbReference>
<dbReference type="GO" id="GO:0003723">
    <property type="term" value="F:RNA binding"/>
    <property type="evidence" value="ECO:0000318"/>
    <property type="project" value="GO_Central"/>
</dbReference>
<dbReference type="GO" id="GO:0006422">
    <property type="term" value="P:aspartyl-tRNA aminoacylation"/>
    <property type="evidence" value="ECO:0000318"/>
    <property type="project" value="GO_Central"/>
</dbReference>
<dbReference type="CDD" id="cd04320">
    <property type="entry name" value="AspRS_cyto_N"/>
    <property type="match status" value="1"/>
</dbReference>
<dbReference type="CDD" id="cd00776">
    <property type="entry name" value="AsxRS_core"/>
    <property type="match status" value="1"/>
</dbReference>
<dbReference type="FunFam" id="2.40.50.140:FF:000144">
    <property type="entry name" value="Aspartate--tRNA ligase, cytoplasmic"/>
    <property type="match status" value="1"/>
</dbReference>
<dbReference type="FunFam" id="3.30.930.10:FF:000013">
    <property type="entry name" value="Aspartate--tRNA ligase, cytoplasmic"/>
    <property type="match status" value="1"/>
</dbReference>
<dbReference type="Gene3D" id="3.30.930.10">
    <property type="entry name" value="Bira Bifunctional Protein, Domain 2"/>
    <property type="match status" value="1"/>
</dbReference>
<dbReference type="Gene3D" id="2.40.50.140">
    <property type="entry name" value="Nucleic acid-binding proteins"/>
    <property type="match status" value="1"/>
</dbReference>
<dbReference type="HAMAP" id="MF_02075">
    <property type="entry name" value="Asp_tRNA_synth_type2"/>
    <property type="match status" value="1"/>
</dbReference>
<dbReference type="InterPro" id="IPR004364">
    <property type="entry name" value="Aa-tRNA-synt_II"/>
</dbReference>
<dbReference type="InterPro" id="IPR006195">
    <property type="entry name" value="aa-tRNA-synth_II"/>
</dbReference>
<dbReference type="InterPro" id="IPR045864">
    <property type="entry name" value="aa-tRNA-synth_II/BPL/LPL"/>
</dbReference>
<dbReference type="InterPro" id="IPR004523">
    <property type="entry name" value="Asp-tRNA_synthase_2"/>
</dbReference>
<dbReference type="InterPro" id="IPR002312">
    <property type="entry name" value="Asp/Asn-tRNA-synth_IIb"/>
</dbReference>
<dbReference type="InterPro" id="IPR012340">
    <property type="entry name" value="NA-bd_OB-fold"/>
</dbReference>
<dbReference type="InterPro" id="IPR004365">
    <property type="entry name" value="NA-bd_OB_tRNA"/>
</dbReference>
<dbReference type="NCBIfam" id="TIGR00458">
    <property type="entry name" value="aspS_nondisc"/>
    <property type="match status" value="1"/>
</dbReference>
<dbReference type="NCBIfam" id="NF003483">
    <property type="entry name" value="PRK05159.1"/>
    <property type="match status" value="1"/>
</dbReference>
<dbReference type="PANTHER" id="PTHR43450:SF1">
    <property type="entry name" value="ASPARTATE--TRNA LIGASE, CYTOPLASMIC"/>
    <property type="match status" value="1"/>
</dbReference>
<dbReference type="PANTHER" id="PTHR43450">
    <property type="entry name" value="ASPARTYL-TRNA SYNTHETASE"/>
    <property type="match status" value="1"/>
</dbReference>
<dbReference type="Pfam" id="PF00152">
    <property type="entry name" value="tRNA-synt_2"/>
    <property type="match status" value="1"/>
</dbReference>
<dbReference type="Pfam" id="PF01336">
    <property type="entry name" value="tRNA_anti-codon"/>
    <property type="match status" value="1"/>
</dbReference>
<dbReference type="PRINTS" id="PR01042">
    <property type="entry name" value="TRNASYNTHASP"/>
</dbReference>
<dbReference type="SUPFAM" id="SSF55681">
    <property type="entry name" value="Class II aaRS and biotin synthetases"/>
    <property type="match status" value="1"/>
</dbReference>
<dbReference type="SUPFAM" id="SSF50249">
    <property type="entry name" value="Nucleic acid-binding proteins"/>
    <property type="match status" value="1"/>
</dbReference>
<dbReference type="PROSITE" id="PS50862">
    <property type="entry name" value="AA_TRNA_LIGASE_II"/>
    <property type="match status" value="1"/>
</dbReference>
<reference key="1">
    <citation type="journal article" date="1989" name="J. Biol. Chem.">
        <title>Molecular cloning and primary structure of cDNA encoding the catalytic domain of rat liver aspartyl-tRNA synthetase.</title>
        <authorList>
            <person name="Mirande M."/>
            <person name="Waller J.-P."/>
        </authorList>
    </citation>
    <scope>NUCLEOTIDE SEQUENCE [MRNA]</scope>
    <scope>FUNCTION</scope>
    <scope>CATALYTIC ACTIVITY</scope>
    <scope>SUBUNIT</scope>
    <source>
        <tissue>Liver</tissue>
    </source>
</reference>
<reference key="2">
    <citation type="journal article" date="1996" name="Gene">
        <title>Genomic organization of the rat aspartyl-tRNA synthetase gene family: a single active gene and several retropseudogenes.</title>
        <authorList>
            <person name="Lazard M."/>
            <person name="Agou F."/>
            <person name="Cavarelli J."/>
            <person name="Latreille M.T."/>
            <person name="Moras D."/>
            <person name="Mirande M."/>
        </authorList>
    </citation>
    <scope>NUCLEOTIDE SEQUENCE [GENOMIC DNA]</scope>
    <source>
        <tissue>Liver</tissue>
    </source>
</reference>
<reference key="3">
    <citation type="journal article" date="2004" name="Genome Res.">
        <title>The status, quality, and expansion of the NIH full-length cDNA project: the Mammalian Gene Collection (MGC).</title>
        <authorList>
            <consortium name="The MGC Project Team"/>
        </authorList>
    </citation>
    <scope>NUCLEOTIDE SEQUENCE [LARGE SCALE MRNA]</scope>
    <source>
        <tissue>Lung</tissue>
    </source>
</reference>
<accession>P15178</accession>
<gene>
    <name type="primary">Dars1</name>
    <name type="synonym">Dars</name>
    <name type="synonym">Drs1</name>
</gene>